<keyword id="KW-0150">Chloroplast</keyword>
<keyword id="KW-0472">Membrane</keyword>
<keyword id="KW-0934">Plastid</keyword>
<keyword id="KW-1001">Plastid inner membrane</keyword>
<keyword id="KW-0653">Protein transport</keyword>
<keyword id="KW-0812">Transmembrane</keyword>
<keyword id="KW-1133">Transmembrane helix</keyword>
<keyword id="KW-0813">Transport</keyword>
<dbReference type="EMBL" id="AP009368">
    <property type="protein sequence ID" value="BAF49998.1"/>
    <property type="molecule type" value="Genomic_DNA"/>
</dbReference>
<dbReference type="EMBL" id="AP009368">
    <property type="protein sequence ID" value="BAF49986.1"/>
    <property type="molecule type" value="Genomic_DNA"/>
</dbReference>
<dbReference type="GO" id="GO:0009706">
    <property type="term" value="C:chloroplast inner membrane"/>
    <property type="evidence" value="ECO:0007669"/>
    <property type="project" value="UniProtKB-SubCell"/>
</dbReference>
<dbReference type="GO" id="GO:0015031">
    <property type="term" value="P:protein transport"/>
    <property type="evidence" value="ECO:0007669"/>
    <property type="project" value="UniProtKB-KW"/>
</dbReference>
<dbReference type="InterPro" id="IPR008896">
    <property type="entry name" value="TIC214"/>
</dbReference>
<dbReference type="PANTHER" id="PTHR33163:SF40">
    <property type="entry name" value="PROTEIN TIC 214"/>
    <property type="match status" value="1"/>
</dbReference>
<dbReference type="PANTHER" id="PTHR33163">
    <property type="entry name" value="PROTEIN TIC 214-RELATED"/>
    <property type="match status" value="1"/>
</dbReference>
<dbReference type="Pfam" id="PF05758">
    <property type="entry name" value="Ycf1"/>
    <property type="match status" value="1"/>
</dbReference>
<gene>
    <name evidence="1" type="primary">TIC214</name>
    <name type="synonym">ycf1-A</name>
</gene>
<gene>
    <name evidence="1" type="primary">TIC214</name>
    <name type="synonym">ycf1-B</name>
</gene>
<reference key="1">
    <citation type="submission" date="2007-03" db="EMBL/GenBank/DDBJ databases">
        <title>Sequence analysis of Arabidopsis pumila JS2 chloroplast DNA.</title>
        <authorList>
            <person name="Hosouchi T."/>
            <person name="Tsuruoka H."/>
            <person name="Kotani H."/>
        </authorList>
    </citation>
    <scope>NUCLEOTIDE SEQUENCE [LARGE SCALE GENOMIC DNA]</scope>
</reference>
<feature type="chain" id="PRO_0000326583" description="Protein TIC 214">
    <location>
        <begin position="1"/>
        <end position="1794"/>
    </location>
</feature>
<feature type="transmembrane region" description="Helical" evidence="2">
    <location>
        <begin position="19"/>
        <end position="39"/>
    </location>
</feature>
<feature type="transmembrane region" description="Helical" evidence="2">
    <location>
        <begin position="68"/>
        <end position="88"/>
    </location>
</feature>
<feature type="transmembrane region" description="Helical" evidence="2">
    <location>
        <begin position="91"/>
        <end position="111"/>
    </location>
</feature>
<feature type="transmembrane region" description="Helical" evidence="2">
    <location>
        <begin position="133"/>
        <end position="153"/>
    </location>
</feature>
<feature type="transmembrane region" description="Helical" evidence="2">
    <location>
        <begin position="176"/>
        <end position="196"/>
    </location>
</feature>
<feature type="transmembrane region" description="Helical" evidence="2">
    <location>
        <begin position="227"/>
        <end position="247"/>
    </location>
</feature>
<sequence>MMVFQSFILGNLVSLCMKIINSVVVVGLYYGFLTTFSIGPSYLFLLRARVMDEGEEGTEKKVSATTGFIAGQLMMFISIYYAPLHLALGRPHTITVLALPYLLFHFFWNNHKHFFDYGSTTRNEMRNLRIQCVFLNNLIFQLFNHFILPSSMLARLVNIYMFRCNNKMLFVTSSFVGWLIGHILFMKWVGLVLVWIQQNNSIRSNVLIRSNKYKFLVSELRNSMARIFSILLFITCVYYLGRIPSPIFTKKLKGTSETGGTKQDQEVSTEEAPFPSLFSEEGEDLDKIDEMEEIRVNGKDKINKDDEFHVRTYYNYKTVSENLDGNKENSNLEFFKIKKKEDHFLWFEKPFVTLVFDYKRWNRPNRYIKNDKIENTVRNEMSQYFFYTCQSDGKERISFTYPPNLSTFFEMIQKRIPSFTREKTPSDQVSTYWSFIHEEKKENLKKAFLNRIEALDKEWSVENILEKTTRFCYNEAKKEYLPKIYDPFLHGVSRGKIKKLPPLQIITKTYRKNNIGRSWINKIHGLLLKINYHKFEQTIEKFNRKSLSIEKKLSFFSEPQQEEKIHSEEEIKVFKFLFDIVRTDSNDQTLIKNFSDFHEINKKVPRWSYKLISELEELEGENEENVPMEPGIRSRKAKRVVVFTDKEPHDEIYTNLKDNQNSDQKDEMALIRYSQQSDFRREIIKGSMRSQRRKTVIWDFFQAKVHSPLFFDRIDKLFFFSFDIWGLKKQILRNFMWKNKKKNFDKKEEEQSKIEEKRRIEIAETWDSFLFAQIIRGSLLVIQSILRKYIILPLLIIIKNSVRMLLFQFPEWSEDLKDWKREMHVKCTYNGVQLSETEFPRNWLTDGIQIKILFPFYLKPWHKSKFQASQKARLKKTTDKREKNDFCFLTVWGTETELPFGSAQKKPSFFEPIFKELKKRIKKLKTKSFLVLSIFKERATIFLKVAKEIKNWILKNFLFIKGKIKDLSKRNKIPVFDSREIYELNVNQTKKDSIISNQMINELSVQKKSMEWTNSSLSENKIKNLIDRIKTIRNQIEEISKEKQNLTNSCTKLRYDSKIIESSKKIWQTFKRKNTRLIRKSIFFIKFCIEQLSRAFFLGIINIPRTTIQLFFESTKTILDKYIYKNQENGEKKKKKNTIYFISTIKNLISKKKISYDLCSLSQAYVFYKLSQIKVSNFSKLKDVFEYNIRITSFFVKNQIKVFFQEQGIFHYELKNKTFLNSEVNQWKNWLRSHYQYNLPQIAWARLVTQNWKKKINKDSLVLNPSLTKEDSYEKKKFDNYKKQNFFEADALLNPKHNFKKDSIYNLFCYKSIHSTEKNLDMSIGIALDNCLVSSFLEKYNIRGIGEIRHRKYLDWRILNFWFTKKVNIEPWVDTKSKKKYINTKVQNYQRIDKITKTGLANQKRNFFDWMGMNEEILNHRITNFEFFFFPEFLLFSSTYKIKPWVIPIKLLLLNFTENINVSKNITRKKKGFIPSNEKKSLRFYNLTKEEKESAGQVELESDKEKKRNPESALLNQEKNIEENYAESTIKKRKNKKQYKSNSEAELDLFLTRYSRFQLRWNCFFNQKILNNVKVYCLLVRLKNPNEIAISSIERGEMSLDILMIEKNFTFAKLMKKGILIIEPIRLSVQNDGQLIIYRTIGISLVHKNKHKISKRYKKKSYIDKKKIEKSITKYQKKTVNRKKNNYDFFVPENILSPKRRREFRILICFNLKKKTVRDRNSRFDKNIQNWTTVLHKKKDLDKDKKNLINLKSFLWPNFKLKNLACMNRYWFNTTNGNHFSMIRIRMYTRFPIH</sequence>
<organism>
    <name type="scientific">Olimarabidopsis pumila</name>
    <name type="common">Dwarf rocket</name>
    <name type="synonym">Arabidopsis griffithiana</name>
    <dbReference type="NCBI Taxonomy" id="74718"/>
    <lineage>
        <taxon>Eukaryota</taxon>
        <taxon>Viridiplantae</taxon>
        <taxon>Streptophyta</taxon>
        <taxon>Embryophyta</taxon>
        <taxon>Tracheophyta</taxon>
        <taxon>Spermatophyta</taxon>
        <taxon>Magnoliopsida</taxon>
        <taxon>eudicotyledons</taxon>
        <taxon>Gunneridae</taxon>
        <taxon>Pentapetalae</taxon>
        <taxon>rosids</taxon>
        <taxon>malvids</taxon>
        <taxon>Brassicales</taxon>
        <taxon>Brassicaceae</taxon>
        <taxon>Alyssopsideae</taxon>
        <taxon>Olimarabidopsis</taxon>
    </lineage>
</organism>
<comment type="function">
    <text evidence="1">Involved in protein precursor import into chloroplasts. May be part of an intermediate translocation complex acting as a protein-conducting channel at the inner envelope.</text>
</comment>
<comment type="subunit">
    <text evidence="1">Part of the Tic complex.</text>
</comment>
<comment type="subcellular location">
    <subcellularLocation>
        <location evidence="1">Plastid</location>
        <location evidence="1">Chloroplast inner membrane</location>
        <topology evidence="2">Multi-pass membrane protein</topology>
    </subcellularLocation>
</comment>
<comment type="miscellaneous">
    <text>There is a partial copy of the N-terminus (positions 1-343) of ycf1 in the inverted repeat (BAF49986).</text>
</comment>
<comment type="similarity">
    <text evidence="3">Belongs to the TIC214 family.</text>
</comment>
<name>TI214_OLIPU</name>
<proteinExistence type="inferred from homology"/>
<protein>
    <recommendedName>
        <fullName evidence="1">Protein TIC 214</fullName>
    </recommendedName>
    <alternativeName>
        <fullName evidence="1">Translocon at the inner envelope membrane of chloroplasts 214</fullName>
        <shortName evidence="1">AtTIC214</shortName>
    </alternativeName>
</protein>
<evidence type="ECO:0000250" key="1">
    <source>
        <dbReference type="UniProtKB" id="P56785"/>
    </source>
</evidence>
<evidence type="ECO:0000255" key="2"/>
<evidence type="ECO:0000305" key="3"/>
<accession>A4QJZ0</accession>
<accession>A4QJX8</accession>
<geneLocation type="chloroplast"/>